<evidence type="ECO:0000255" key="1">
    <source>
        <dbReference type="HAMAP-Rule" id="MF_00736"/>
    </source>
</evidence>
<evidence type="ECO:0000305" key="2"/>
<dbReference type="EMBL" id="AP010918">
    <property type="protein sequence ID" value="BAH24952.1"/>
    <property type="molecule type" value="Genomic_DNA"/>
</dbReference>
<dbReference type="RefSeq" id="WP_003403291.1">
    <property type="nucleotide sequence ID" value="NZ_CP014566.1"/>
</dbReference>
<dbReference type="SMR" id="C1AKX3"/>
<dbReference type="GeneID" id="45424600"/>
<dbReference type="KEGG" id="mbt:JTY_0659"/>
<dbReference type="HOGENOM" id="CLU_074237_2_1_11"/>
<dbReference type="GO" id="GO:0022625">
    <property type="term" value="C:cytosolic large ribosomal subunit"/>
    <property type="evidence" value="ECO:0007669"/>
    <property type="project" value="TreeGrafter"/>
</dbReference>
<dbReference type="GO" id="GO:0070180">
    <property type="term" value="F:large ribosomal subunit rRNA binding"/>
    <property type="evidence" value="ECO:0007669"/>
    <property type="project" value="UniProtKB-UniRule"/>
</dbReference>
<dbReference type="GO" id="GO:0003735">
    <property type="term" value="F:structural constituent of ribosome"/>
    <property type="evidence" value="ECO:0007669"/>
    <property type="project" value="InterPro"/>
</dbReference>
<dbReference type="GO" id="GO:0006412">
    <property type="term" value="P:translation"/>
    <property type="evidence" value="ECO:0007669"/>
    <property type="project" value="UniProtKB-UniRule"/>
</dbReference>
<dbReference type="CDD" id="cd00349">
    <property type="entry name" value="Ribosomal_L11"/>
    <property type="match status" value="1"/>
</dbReference>
<dbReference type="FunFam" id="1.10.10.250:FF:000001">
    <property type="entry name" value="50S ribosomal protein L11"/>
    <property type="match status" value="1"/>
</dbReference>
<dbReference type="FunFam" id="3.30.1550.10:FF:000001">
    <property type="entry name" value="50S ribosomal protein L11"/>
    <property type="match status" value="1"/>
</dbReference>
<dbReference type="Gene3D" id="1.10.10.250">
    <property type="entry name" value="Ribosomal protein L11, C-terminal domain"/>
    <property type="match status" value="1"/>
</dbReference>
<dbReference type="Gene3D" id="3.30.1550.10">
    <property type="entry name" value="Ribosomal protein L11/L12, N-terminal domain"/>
    <property type="match status" value="1"/>
</dbReference>
<dbReference type="HAMAP" id="MF_00736">
    <property type="entry name" value="Ribosomal_uL11"/>
    <property type="match status" value="1"/>
</dbReference>
<dbReference type="InterPro" id="IPR000911">
    <property type="entry name" value="Ribosomal_uL11"/>
</dbReference>
<dbReference type="InterPro" id="IPR006519">
    <property type="entry name" value="Ribosomal_uL11_bac-typ"/>
</dbReference>
<dbReference type="InterPro" id="IPR020783">
    <property type="entry name" value="Ribosomal_uL11_C"/>
</dbReference>
<dbReference type="InterPro" id="IPR036769">
    <property type="entry name" value="Ribosomal_uL11_C_sf"/>
</dbReference>
<dbReference type="InterPro" id="IPR020785">
    <property type="entry name" value="Ribosomal_uL11_CS"/>
</dbReference>
<dbReference type="InterPro" id="IPR020784">
    <property type="entry name" value="Ribosomal_uL11_N"/>
</dbReference>
<dbReference type="InterPro" id="IPR036796">
    <property type="entry name" value="Ribosomal_uL11_N_sf"/>
</dbReference>
<dbReference type="NCBIfam" id="TIGR01632">
    <property type="entry name" value="L11_bact"/>
    <property type="match status" value="1"/>
</dbReference>
<dbReference type="PANTHER" id="PTHR11661">
    <property type="entry name" value="60S RIBOSOMAL PROTEIN L12"/>
    <property type="match status" value="1"/>
</dbReference>
<dbReference type="PANTHER" id="PTHR11661:SF1">
    <property type="entry name" value="LARGE RIBOSOMAL SUBUNIT PROTEIN UL11M"/>
    <property type="match status" value="1"/>
</dbReference>
<dbReference type="Pfam" id="PF00298">
    <property type="entry name" value="Ribosomal_L11"/>
    <property type="match status" value="1"/>
</dbReference>
<dbReference type="Pfam" id="PF03946">
    <property type="entry name" value="Ribosomal_L11_N"/>
    <property type="match status" value="1"/>
</dbReference>
<dbReference type="SMART" id="SM00649">
    <property type="entry name" value="RL11"/>
    <property type="match status" value="1"/>
</dbReference>
<dbReference type="SUPFAM" id="SSF54747">
    <property type="entry name" value="Ribosomal L11/L12e N-terminal domain"/>
    <property type="match status" value="1"/>
</dbReference>
<dbReference type="SUPFAM" id="SSF46906">
    <property type="entry name" value="Ribosomal protein L11, C-terminal domain"/>
    <property type="match status" value="1"/>
</dbReference>
<dbReference type="PROSITE" id="PS00359">
    <property type="entry name" value="RIBOSOMAL_L11"/>
    <property type="match status" value="1"/>
</dbReference>
<reference key="1">
    <citation type="journal article" date="2009" name="Vaccine">
        <title>Whole genome sequence analysis of Mycobacterium bovis bacillus Calmette-Guerin (BCG) Tokyo 172: a comparative study of BCG vaccine substrains.</title>
        <authorList>
            <person name="Seki M."/>
            <person name="Honda I."/>
            <person name="Fujita I."/>
            <person name="Yano I."/>
            <person name="Yamamoto S."/>
            <person name="Koyama A."/>
        </authorList>
    </citation>
    <scope>NUCLEOTIDE SEQUENCE [LARGE SCALE GENOMIC DNA]</scope>
    <source>
        <strain>BCG / Tokyo 172 / ATCC 35737 / TMC 1019</strain>
    </source>
</reference>
<sequence length="142" mass="15003">MAPKKKVAGLIKLQIVAGQANPAPPVGPALGQHGVNIMEFCKAYNAATENQRGNVIPVEITVYEDRSFTFTLKTPPAAKLLLKAAGVAKGSAEPHKTKVAKVTWDQVREIAETKKTDLNANDVDAAAKIIAGTARSMGITVE</sequence>
<name>RL11_MYCBT</name>
<keyword id="KW-0488">Methylation</keyword>
<keyword id="KW-0687">Ribonucleoprotein</keyword>
<keyword id="KW-0689">Ribosomal protein</keyword>
<keyword id="KW-0694">RNA-binding</keyword>
<keyword id="KW-0699">rRNA-binding</keyword>
<comment type="function">
    <text evidence="1">Forms part of the ribosomal stalk which helps the ribosome interact with GTP-bound translation factors.</text>
</comment>
<comment type="subunit">
    <text evidence="1">Part of the ribosomal stalk of the 50S ribosomal subunit. Interacts with L10 and the large rRNA to form the base of the stalk. L10 forms an elongated spine to which L12 dimers bind in a sequential fashion forming a multimeric L10(L12)X complex.</text>
</comment>
<comment type="PTM">
    <text evidence="1">One or more lysine residues are methylated.</text>
</comment>
<comment type="similarity">
    <text evidence="1">Belongs to the universal ribosomal protein uL11 family.</text>
</comment>
<feature type="chain" id="PRO_1000195674" description="Large ribosomal subunit protein uL11">
    <location>
        <begin position="1"/>
        <end position="142"/>
    </location>
</feature>
<protein>
    <recommendedName>
        <fullName evidence="1">Large ribosomal subunit protein uL11</fullName>
    </recommendedName>
    <alternativeName>
        <fullName evidence="2">50S ribosomal protein L11</fullName>
    </alternativeName>
</protein>
<accession>C1AKX3</accession>
<gene>
    <name evidence="1" type="primary">rplK</name>
    <name type="ordered locus">JTY_0659</name>
</gene>
<proteinExistence type="inferred from homology"/>
<organism>
    <name type="scientific">Mycobacterium bovis (strain BCG / Tokyo 172 / ATCC 35737 / TMC 1019)</name>
    <dbReference type="NCBI Taxonomy" id="561275"/>
    <lineage>
        <taxon>Bacteria</taxon>
        <taxon>Bacillati</taxon>
        <taxon>Actinomycetota</taxon>
        <taxon>Actinomycetes</taxon>
        <taxon>Mycobacteriales</taxon>
        <taxon>Mycobacteriaceae</taxon>
        <taxon>Mycobacterium</taxon>
        <taxon>Mycobacterium tuberculosis complex</taxon>
    </lineage>
</organism>